<comment type="function">
    <text evidence="1">Catalyzes the attachment of tyrosine to tRNA(Tyr) in a two-step reaction: tyrosine is first activated by ATP to form Tyr-AMP and then transferred to the acceptor end of tRNA(Tyr).</text>
</comment>
<comment type="catalytic activity">
    <reaction evidence="1">
        <text>tRNA(Tyr) + L-tyrosine + ATP = L-tyrosyl-tRNA(Tyr) + AMP + diphosphate + H(+)</text>
        <dbReference type="Rhea" id="RHEA:10220"/>
        <dbReference type="Rhea" id="RHEA-COMP:9706"/>
        <dbReference type="Rhea" id="RHEA-COMP:9707"/>
        <dbReference type="ChEBI" id="CHEBI:15378"/>
        <dbReference type="ChEBI" id="CHEBI:30616"/>
        <dbReference type="ChEBI" id="CHEBI:33019"/>
        <dbReference type="ChEBI" id="CHEBI:58315"/>
        <dbReference type="ChEBI" id="CHEBI:78442"/>
        <dbReference type="ChEBI" id="CHEBI:78536"/>
        <dbReference type="ChEBI" id="CHEBI:456215"/>
        <dbReference type="EC" id="6.1.1.1"/>
    </reaction>
</comment>
<comment type="subunit">
    <text evidence="1">Homodimer.</text>
</comment>
<comment type="subcellular location">
    <subcellularLocation>
        <location evidence="1">Cytoplasm</location>
    </subcellularLocation>
</comment>
<comment type="similarity">
    <text evidence="1">Belongs to the class-I aminoacyl-tRNA synthetase family. TyrS type 1 subfamily.</text>
</comment>
<organism>
    <name type="scientific">Yersinia pestis (strain Pestoides F)</name>
    <dbReference type="NCBI Taxonomy" id="386656"/>
    <lineage>
        <taxon>Bacteria</taxon>
        <taxon>Pseudomonadati</taxon>
        <taxon>Pseudomonadota</taxon>
        <taxon>Gammaproteobacteria</taxon>
        <taxon>Enterobacterales</taxon>
        <taxon>Yersiniaceae</taxon>
        <taxon>Yersinia</taxon>
    </lineage>
</organism>
<sequence length="424" mass="47158">MTSSNLIKQLQERGLVAQVTDEDALAERLAQGPISLYCGFDPTADSLHLGHLVPLLCLKRFQLAGHRPVALVGGATGMIGDPSFKASERKLNTEDTVNEWVEKIRHQVSPFLDFDCGENSAIAANNYDWFGGMNVLTFLRDIGKHFSVNQMINKEAVKQRLNRDDSGISFTEFSYNLLQAYDFACLNKNHGVALQIGGSDQWGNITSGIDLTRRLHQQQVYGLTVPLITKADGTKFGKTEGGAVWLDPKKTSPYKFYQFWINTADADVYRFLKFFTFMSLEEINALEEEDKNSGKAPRAQYVLAENVTGMVHGPEGLAAAKRITDSLFSGDLHDMTEADFAQLAQDGMPTVELNRDADLQQALVNAELVPSRGQARTMIGSNAVAINGEKQADPEYVFTDADRLFGRYTLLRRGKKHYCLISWL</sequence>
<protein>
    <recommendedName>
        <fullName evidence="1">Tyrosine--tRNA ligase</fullName>
        <ecNumber evidence="1">6.1.1.1</ecNumber>
    </recommendedName>
    <alternativeName>
        <fullName evidence="1">Tyrosyl-tRNA synthetase</fullName>
        <shortName evidence="1">TyrRS</shortName>
    </alternativeName>
</protein>
<reference key="1">
    <citation type="submission" date="2007-02" db="EMBL/GenBank/DDBJ databases">
        <title>Complete sequence of chromosome of Yersinia pestis Pestoides F.</title>
        <authorList>
            <consortium name="US DOE Joint Genome Institute"/>
            <person name="Copeland A."/>
            <person name="Lucas S."/>
            <person name="Lapidus A."/>
            <person name="Barry K."/>
            <person name="Detter J.C."/>
            <person name="Glavina del Rio T."/>
            <person name="Hammon N."/>
            <person name="Israni S."/>
            <person name="Dalin E."/>
            <person name="Tice H."/>
            <person name="Pitluck S."/>
            <person name="Di Bartolo G."/>
            <person name="Chain P."/>
            <person name="Malfatti S."/>
            <person name="Shin M."/>
            <person name="Vergez L."/>
            <person name="Schmutz J."/>
            <person name="Larimer F."/>
            <person name="Land M."/>
            <person name="Hauser L."/>
            <person name="Worsham P."/>
            <person name="Chu M."/>
            <person name="Bearden S."/>
            <person name="Garcia E."/>
            <person name="Richardson P."/>
        </authorList>
    </citation>
    <scope>NUCLEOTIDE SEQUENCE [LARGE SCALE GENOMIC DNA]</scope>
    <source>
        <strain>Pestoides F</strain>
    </source>
</reference>
<feature type="chain" id="PRO_1000088646" description="Tyrosine--tRNA ligase">
    <location>
        <begin position="1"/>
        <end position="424"/>
    </location>
</feature>
<feature type="domain" description="S4 RNA-binding" evidence="1">
    <location>
        <begin position="357"/>
        <end position="414"/>
    </location>
</feature>
<feature type="short sequence motif" description="'HIGH' region">
    <location>
        <begin position="42"/>
        <end position="51"/>
    </location>
</feature>
<feature type="short sequence motif" description="'KMSKS' region">
    <location>
        <begin position="235"/>
        <end position="239"/>
    </location>
</feature>
<feature type="binding site" evidence="1">
    <location>
        <position position="37"/>
    </location>
    <ligand>
        <name>L-tyrosine</name>
        <dbReference type="ChEBI" id="CHEBI:58315"/>
    </ligand>
</feature>
<feature type="binding site" evidence="1">
    <location>
        <position position="175"/>
    </location>
    <ligand>
        <name>L-tyrosine</name>
        <dbReference type="ChEBI" id="CHEBI:58315"/>
    </ligand>
</feature>
<feature type="binding site" evidence="1">
    <location>
        <position position="179"/>
    </location>
    <ligand>
        <name>L-tyrosine</name>
        <dbReference type="ChEBI" id="CHEBI:58315"/>
    </ligand>
</feature>
<feature type="binding site" evidence="1">
    <location>
        <position position="238"/>
    </location>
    <ligand>
        <name>ATP</name>
        <dbReference type="ChEBI" id="CHEBI:30616"/>
    </ligand>
</feature>
<gene>
    <name evidence="1" type="primary">tyrS</name>
    <name type="ordered locus">YPDSF_0777</name>
</gene>
<name>SYY_YERPP</name>
<accession>A4TIS1</accession>
<proteinExistence type="inferred from homology"/>
<keyword id="KW-0030">Aminoacyl-tRNA synthetase</keyword>
<keyword id="KW-0067">ATP-binding</keyword>
<keyword id="KW-0963">Cytoplasm</keyword>
<keyword id="KW-0436">Ligase</keyword>
<keyword id="KW-0547">Nucleotide-binding</keyword>
<keyword id="KW-0648">Protein biosynthesis</keyword>
<keyword id="KW-0694">RNA-binding</keyword>
<evidence type="ECO:0000255" key="1">
    <source>
        <dbReference type="HAMAP-Rule" id="MF_02006"/>
    </source>
</evidence>
<dbReference type="EC" id="6.1.1.1" evidence="1"/>
<dbReference type="EMBL" id="CP000668">
    <property type="protein sequence ID" value="ABP39183.1"/>
    <property type="molecule type" value="Genomic_DNA"/>
</dbReference>
<dbReference type="RefSeq" id="WP_002210960.1">
    <property type="nucleotide sequence ID" value="NZ_CP009715.1"/>
</dbReference>
<dbReference type="SMR" id="A4TIS1"/>
<dbReference type="GeneID" id="57976306"/>
<dbReference type="KEGG" id="ypp:YPDSF_0777"/>
<dbReference type="PATRIC" id="fig|386656.14.peg.3086"/>
<dbReference type="GO" id="GO:0005829">
    <property type="term" value="C:cytosol"/>
    <property type="evidence" value="ECO:0007669"/>
    <property type="project" value="TreeGrafter"/>
</dbReference>
<dbReference type="GO" id="GO:0005524">
    <property type="term" value="F:ATP binding"/>
    <property type="evidence" value="ECO:0007669"/>
    <property type="project" value="UniProtKB-UniRule"/>
</dbReference>
<dbReference type="GO" id="GO:0003723">
    <property type="term" value="F:RNA binding"/>
    <property type="evidence" value="ECO:0007669"/>
    <property type="project" value="UniProtKB-KW"/>
</dbReference>
<dbReference type="GO" id="GO:0004831">
    <property type="term" value="F:tyrosine-tRNA ligase activity"/>
    <property type="evidence" value="ECO:0007669"/>
    <property type="project" value="UniProtKB-UniRule"/>
</dbReference>
<dbReference type="GO" id="GO:0006437">
    <property type="term" value="P:tyrosyl-tRNA aminoacylation"/>
    <property type="evidence" value="ECO:0007669"/>
    <property type="project" value="UniProtKB-UniRule"/>
</dbReference>
<dbReference type="CDD" id="cd00165">
    <property type="entry name" value="S4"/>
    <property type="match status" value="1"/>
</dbReference>
<dbReference type="CDD" id="cd00805">
    <property type="entry name" value="TyrRS_core"/>
    <property type="match status" value="1"/>
</dbReference>
<dbReference type="FunFam" id="1.10.240.10:FF:000001">
    <property type="entry name" value="Tyrosine--tRNA ligase"/>
    <property type="match status" value="1"/>
</dbReference>
<dbReference type="FunFam" id="3.10.290.10:FF:000007">
    <property type="entry name" value="Tyrosine--tRNA ligase"/>
    <property type="match status" value="1"/>
</dbReference>
<dbReference type="FunFam" id="3.40.50.620:FF:000008">
    <property type="entry name" value="Tyrosine--tRNA ligase"/>
    <property type="match status" value="1"/>
</dbReference>
<dbReference type="Gene3D" id="3.40.50.620">
    <property type="entry name" value="HUPs"/>
    <property type="match status" value="1"/>
</dbReference>
<dbReference type="Gene3D" id="3.10.290.10">
    <property type="entry name" value="RNA-binding S4 domain"/>
    <property type="match status" value="1"/>
</dbReference>
<dbReference type="Gene3D" id="1.10.240.10">
    <property type="entry name" value="Tyrosyl-Transfer RNA Synthetase"/>
    <property type="match status" value="1"/>
</dbReference>
<dbReference type="HAMAP" id="MF_02006">
    <property type="entry name" value="Tyr_tRNA_synth_type1"/>
    <property type="match status" value="1"/>
</dbReference>
<dbReference type="InterPro" id="IPR001412">
    <property type="entry name" value="aa-tRNA-synth_I_CS"/>
</dbReference>
<dbReference type="InterPro" id="IPR002305">
    <property type="entry name" value="aa-tRNA-synth_Ic"/>
</dbReference>
<dbReference type="InterPro" id="IPR014729">
    <property type="entry name" value="Rossmann-like_a/b/a_fold"/>
</dbReference>
<dbReference type="InterPro" id="IPR002942">
    <property type="entry name" value="S4_RNA-bd"/>
</dbReference>
<dbReference type="InterPro" id="IPR036986">
    <property type="entry name" value="S4_RNA-bd_sf"/>
</dbReference>
<dbReference type="InterPro" id="IPR054608">
    <property type="entry name" value="SYY-like_C"/>
</dbReference>
<dbReference type="InterPro" id="IPR002307">
    <property type="entry name" value="Tyr-tRNA-ligase"/>
</dbReference>
<dbReference type="InterPro" id="IPR024088">
    <property type="entry name" value="Tyr-tRNA-ligase_bac-type"/>
</dbReference>
<dbReference type="InterPro" id="IPR024107">
    <property type="entry name" value="Tyr-tRNA-ligase_bac_1"/>
</dbReference>
<dbReference type="NCBIfam" id="TIGR00234">
    <property type="entry name" value="tyrS"/>
    <property type="match status" value="1"/>
</dbReference>
<dbReference type="PANTHER" id="PTHR11766:SF0">
    <property type="entry name" value="TYROSINE--TRNA LIGASE, MITOCHONDRIAL"/>
    <property type="match status" value="1"/>
</dbReference>
<dbReference type="PANTHER" id="PTHR11766">
    <property type="entry name" value="TYROSYL-TRNA SYNTHETASE"/>
    <property type="match status" value="1"/>
</dbReference>
<dbReference type="Pfam" id="PF22421">
    <property type="entry name" value="SYY_C-terminal"/>
    <property type="match status" value="1"/>
</dbReference>
<dbReference type="Pfam" id="PF00579">
    <property type="entry name" value="tRNA-synt_1b"/>
    <property type="match status" value="1"/>
</dbReference>
<dbReference type="PRINTS" id="PR01040">
    <property type="entry name" value="TRNASYNTHTYR"/>
</dbReference>
<dbReference type="SMART" id="SM00363">
    <property type="entry name" value="S4"/>
    <property type="match status" value="1"/>
</dbReference>
<dbReference type="SUPFAM" id="SSF55174">
    <property type="entry name" value="Alpha-L RNA-binding motif"/>
    <property type="match status" value="1"/>
</dbReference>
<dbReference type="SUPFAM" id="SSF52374">
    <property type="entry name" value="Nucleotidylyl transferase"/>
    <property type="match status" value="1"/>
</dbReference>
<dbReference type="PROSITE" id="PS00178">
    <property type="entry name" value="AA_TRNA_LIGASE_I"/>
    <property type="match status" value="1"/>
</dbReference>
<dbReference type="PROSITE" id="PS50889">
    <property type="entry name" value="S4"/>
    <property type="match status" value="1"/>
</dbReference>